<gene>
    <name evidence="1" type="primary">rpmD</name>
    <name type="ordered locus">SaurJH9_2259</name>
</gene>
<protein>
    <recommendedName>
        <fullName evidence="1">Large ribosomal subunit protein uL30</fullName>
    </recommendedName>
    <alternativeName>
        <fullName evidence="2">50S ribosomal protein L30</fullName>
    </alternativeName>
</protein>
<proteinExistence type="inferred from homology"/>
<sequence length="59" mass="6554">MAKLQITLTRSVIGRPETQRKTVEALGLKKTNSSVVVEDNPAIRGQINKVKHLVTVEEK</sequence>
<dbReference type="EMBL" id="CP000703">
    <property type="protein sequence ID" value="ABQ50039.1"/>
    <property type="molecule type" value="Genomic_DNA"/>
</dbReference>
<dbReference type="RefSeq" id="WP_001096577.1">
    <property type="nucleotide sequence ID" value="NC_009487.1"/>
</dbReference>
<dbReference type="SMR" id="A5IV16"/>
<dbReference type="KEGG" id="saj:SaurJH9_2259"/>
<dbReference type="HOGENOM" id="CLU_131047_2_1_9"/>
<dbReference type="GO" id="GO:0022625">
    <property type="term" value="C:cytosolic large ribosomal subunit"/>
    <property type="evidence" value="ECO:0007669"/>
    <property type="project" value="TreeGrafter"/>
</dbReference>
<dbReference type="GO" id="GO:0003735">
    <property type="term" value="F:structural constituent of ribosome"/>
    <property type="evidence" value="ECO:0007669"/>
    <property type="project" value="InterPro"/>
</dbReference>
<dbReference type="GO" id="GO:0006412">
    <property type="term" value="P:translation"/>
    <property type="evidence" value="ECO:0007669"/>
    <property type="project" value="UniProtKB-UniRule"/>
</dbReference>
<dbReference type="CDD" id="cd01658">
    <property type="entry name" value="Ribosomal_L30"/>
    <property type="match status" value="1"/>
</dbReference>
<dbReference type="FunFam" id="3.30.1390.20:FF:000001">
    <property type="entry name" value="50S ribosomal protein L30"/>
    <property type="match status" value="1"/>
</dbReference>
<dbReference type="Gene3D" id="3.30.1390.20">
    <property type="entry name" value="Ribosomal protein L30, ferredoxin-like fold domain"/>
    <property type="match status" value="1"/>
</dbReference>
<dbReference type="HAMAP" id="MF_01371_B">
    <property type="entry name" value="Ribosomal_uL30_B"/>
    <property type="match status" value="1"/>
</dbReference>
<dbReference type="InterPro" id="IPR036919">
    <property type="entry name" value="Ribo_uL30_ferredoxin-like_sf"/>
</dbReference>
<dbReference type="InterPro" id="IPR005996">
    <property type="entry name" value="Ribosomal_uL30_bac-type"/>
</dbReference>
<dbReference type="InterPro" id="IPR016082">
    <property type="entry name" value="Ribosomal_uL30_ferredoxin-like"/>
</dbReference>
<dbReference type="NCBIfam" id="TIGR01308">
    <property type="entry name" value="rpmD_bact"/>
    <property type="match status" value="1"/>
</dbReference>
<dbReference type="PANTHER" id="PTHR15892:SF2">
    <property type="entry name" value="LARGE RIBOSOMAL SUBUNIT PROTEIN UL30M"/>
    <property type="match status" value="1"/>
</dbReference>
<dbReference type="PANTHER" id="PTHR15892">
    <property type="entry name" value="MITOCHONDRIAL RIBOSOMAL PROTEIN L30"/>
    <property type="match status" value="1"/>
</dbReference>
<dbReference type="Pfam" id="PF00327">
    <property type="entry name" value="Ribosomal_L30"/>
    <property type="match status" value="1"/>
</dbReference>
<dbReference type="PIRSF" id="PIRSF002211">
    <property type="entry name" value="Ribosomal_L30_bac-type"/>
    <property type="match status" value="1"/>
</dbReference>
<dbReference type="SUPFAM" id="SSF55129">
    <property type="entry name" value="Ribosomal protein L30p/L7e"/>
    <property type="match status" value="1"/>
</dbReference>
<accession>A5IV16</accession>
<evidence type="ECO:0000255" key="1">
    <source>
        <dbReference type="HAMAP-Rule" id="MF_01371"/>
    </source>
</evidence>
<evidence type="ECO:0000305" key="2"/>
<feature type="chain" id="PRO_1000087268" description="Large ribosomal subunit protein uL30">
    <location>
        <begin position="1"/>
        <end position="59"/>
    </location>
</feature>
<reference key="1">
    <citation type="submission" date="2007-05" db="EMBL/GenBank/DDBJ databases">
        <title>Complete sequence of chromosome of Staphylococcus aureus subsp. aureus JH9.</title>
        <authorList>
            <consortium name="US DOE Joint Genome Institute"/>
            <person name="Copeland A."/>
            <person name="Lucas S."/>
            <person name="Lapidus A."/>
            <person name="Barry K."/>
            <person name="Detter J.C."/>
            <person name="Glavina del Rio T."/>
            <person name="Hammon N."/>
            <person name="Israni S."/>
            <person name="Pitluck S."/>
            <person name="Chain P."/>
            <person name="Malfatti S."/>
            <person name="Shin M."/>
            <person name="Vergez L."/>
            <person name="Schmutz J."/>
            <person name="Larimer F."/>
            <person name="Land M."/>
            <person name="Hauser L."/>
            <person name="Kyrpides N."/>
            <person name="Kim E."/>
            <person name="Tomasz A."/>
            <person name="Richardson P."/>
        </authorList>
    </citation>
    <scope>NUCLEOTIDE SEQUENCE [LARGE SCALE GENOMIC DNA]</scope>
    <source>
        <strain>JH9</strain>
    </source>
</reference>
<name>RL30_STAA9</name>
<organism>
    <name type="scientific">Staphylococcus aureus (strain JH9)</name>
    <dbReference type="NCBI Taxonomy" id="359786"/>
    <lineage>
        <taxon>Bacteria</taxon>
        <taxon>Bacillati</taxon>
        <taxon>Bacillota</taxon>
        <taxon>Bacilli</taxon>
        <taxon>Bacillales</taxon>
        <taxon>Staphylococcaceae</taxon>
        <taxon>Staphylococcus</taxon>
    </lineage>
</organism>
<comment type="subunit">
    <text evidence="1">Part of the 50S ribosomal subunit.</text>
</comment>
<comment type="similarity">
    <text evidence="1">Belongs to the universal ribosomal protein uL30 family.</text>
</comment>
<keyword id="KW-0687">Ribonucleoprotein</keyword>
<keyword id="KW-0689">Ribosomal protein</keyword>